<evidence type="ECO:0000250" key="1"/>
<evidence type="ECO:0000250" key="2">
    <source>
        <dbReference type="UniProtKB" id="Q61140"/>
    </source>
</evidence>
<evidence type="ECO:0000250" key="3">
    <source>
        <dbReference type="UniProtKB" id="Q63767"/>
    </source>
</evidence>
<evidence type="ECO:0000255" key="4"/>
<evidence type="ECO:0000255" key="5">
    <source>
        <dbReference type="PROSITE-ProRule" id="PRU00192"/>
    </source>
</evidence>
<evidence type="ECO:0000256" key="6">
    <source>
        <dbReference type="SAM" id="MobiDB-lite"/>
    </source>
</evidence>
<evidence type="ECO:0000269" key="7">
    <source>
    </source>
</evidence>
<evidence type="ECO:0000269" key="8">
    <source>
    </source>
</evidence>
<evidence type="ECO:0000269" key="9">
    <source>
    </source>
</evidence>
<evidence type="ECO:0000269" key="10">
    <source>
    </source>
</evidence>
<evidence type="ECO:0000269" key="11">
    <source>
    </source>
</evidence>
<evidence type="ECO:0000269" key="12">
    <source>
    </source>
</evidence>
<evidence type="ECO:0000269" key="13">
    <source>
    </source>
</evidence>
<evidence type="ECO:0000269" key="14">
    <source>
    </source>
</evidence>
<evidence type="ECO:0000269" key="15">
    <source>
    </source>
</evidence>
<evidence type="ECO:0000269" key="16">
    <source>
    </source>
</evidence>
<evidence type="ECO:0000269" key="17">
    <source>
    </source>
</evidence>
<evidence type="ECO:0000269" key="18">
    <source>
    </source>
</evidence>
<evidence type="ECO:0000269" key="19">
    <source>
    </source>
</evidence>
<evidence type="ECO:0000269" key="20">
    <source>
    </source>
</evidence>
<evidence type="ECO:0000269" key="21">
    <source>
    </source>
</evidence>
<evidence type="ECO:0000269" key="22">
    <source>
    </source>
</evidence>
<evidence type="ECO:0000269" key="23">
    <source>
    </source>
</evidence>
<evidence type="ECO:0000269" key="24">
    <source>
    </source>
</evidence>
<evidence type="ECO:0000269" key="25">
    <source>
    </source>
</evidence>
<evidence type="ECO:0000269" key="26">
    <source ref="2"/>
</evidence>
<evidence type="ECO:0000269" key="27">
    <source ref="3"/>
</evidence>
<evidence type="ECO:0000269" key="28">
    <source ref="7"/>
</evidence>
<evidence type="ECO:0000303" key="29">
    <source>
    </source>
</evidence>
<evidence type="ECO:0000303" key="30">
    <source ref="4"/>
</evidence>
<evidence type="ECO:0000305" key="31"/>
<evidence type="ECO:0007744" key="32">
    <source>
    </source>
</evidence>
<evidence type="ECO:0007744" key="33">
    <source>
    </source>
</evidence>
<evidence type="ECO:0007744" key="34">
    <source>
    </source>
</evidence>
<evidence type="ECO:0007744" key="35">
    <source>
    </source>
</evidence>
<evidence type="ECO:0007829" key="36">
    <source>
        <dbReference type="PDB" id="1WYX"/>
    </source>
</evidence>
<evidence type="ECO:0007829" key="37">
    <source>
        <dbReference type="PDB" id="3T6G"/>
    </source>
</evidence>
<protein>
    <recommendedName>
        <fullName>Breast cancer anti-estrogen resistance protein 1</fullName>
    </recommendedName>
    <alternativeName>
        <fullName>CRK-associated substrate</fullName>
    </alternativeName>
    <alternativeName>
        <fullName>Cas scaffolding protein family member 1</fullName>
    </alternativeName>
    <alternativeName>
        <fullName>p130cas</fullName>
    </alternativeName>
</protein>
<name>BCAR1_HUMAN</name>
<feature type="chain" id="PRO_0000064854" description="Breast cancer anti-estrogen resistance protein 1">
    <location>
        <begin position="1"/>
        <end position="870"/>
    </location>
</feature>
<feature type="domain" description="SH3" evidence="5">
    <location>
        <begin position="3"/>
        <end position="65"/>
    </location>
</feature>
<feature type="region of interest" description="Disordered" evidence="6">
    <location>
        <begin position="70"/>
        <end position="156"/>
    </location>
</feature>
<feature type="region of interest" description="Substrate for kinases" evidence="1">
    <location>
        <begin position="115"/>
        <end position="416"/>
    </location>
</feature>
<feature type="region of interest" description="Disordered" evidence="6">
    <location>
        <begin position="411"/>
        <end position="449"/>
    </location>
</feature>
<feature type="region of interest" description="Disordered" evidence="6">
    <location>
        <begin position="609"/>
        <end position="658"/>
    </location>
</feature>
<feature type="region of interest" description="Disordered" evidence="6">
    <location>
        <begin position="715"/>
        <end position="734"/>
    </location>
</feature>
<feature type="region of interest" description="Divergent helix-loop-helix motif">
    <location>
        <begin position="746"/>
        <end position="796"/>
    </location>
</feature>
<feature type="short sequence motif" description="SH3-binding" evidence="4">
    <location>
        <begin position="635"/>
        <end position="643"/>
    </location>
</feature>
<feature type="compositionally biased region" description="Pro residues" evidence="6">
    <location>
        <begin position="73"/>
        <end position="85"/>
    </location>
</feature>
<feature type="compositionally biased region" description="Polar residues" evidence="6">
    <location>
        <begin position="97"/>
        <end position="111"/>
    </location>
</feature>
<feature type="compositionally biased region" description="Polar residues" evidence="6">
    <location>
        <begin position="135"/>
        <end position="151"/>
    </location>
</feature>
<feature type="compositionally biased region" description="Basic and acidic residues" evidence="6">
    <location>
        <begin position="416"/>
        <end position="426"/>
    </location>
</feature>
<feature type="compositionally biased region" description="Low complexity" evidence="6">
    <location>
        <begin position="427"/>
        <end position="444"/>
    </location>
</feature>
<feature type="compositionally biased region" description="Polar residues" evidence="6">
    <location>
        <begin position="626"/>
        <end position="655"/>
    </location>
</feature>
<feature type="modified residue" description="N-acetylmethionine" evidence="28">
    <location>
        <position position="1"/>
    </location>
</feature>
<feature type="modified residue" description="Phosphotyrosine; by SRC" evidence="23">
    <location>
        <position position="128"/>
    </location>
</feature>
<feature type="modified residue" description="Phosphoserine" evidence="32 33">
    <location>
        <position position="134"/>
    </location>
</feature>
<feature type="modified residue" description="Phosphoserine" evidence="19 32 33 35">
    <location>
        <position position="139"/>
    </location>
</feature>
<feature type="modified residue" description="Phosphotyrosine" evidence="2">
    <location>
        <position position="234"/>
    </location>
</feature>
<feature type="modified residue" description="Phosphotyrosine; by ABL1" evidence="3">
    <location>
        <position position="249"/>
    </location>
</feature>
<feature type="modified residue" description="Phosphothreonine" evidence="32">
    <location>
        <position position="269"/>
    </location>
</feature>
<feature type="modified residue" description="Phosphoserine" evidence="32">
    <location>
        <position position="292"/>
    </location>
</feature>
<feature type="modified residue" description="Phosphotyrosine" evidence="2">
    <location>
        <position position="362"/>
    </location>
</feature>
<feature type="modified residue" description="Phosphotyrosine" evidence="2">
    <location>
        <position position="372"/>
    </location>
</feature>
<feature type="modified residue" description="Phosphotyrosine" evidence="2">
    <location>
        <position position="410"/>
    </location>
</feature>
<feature type="modified residue" description="Phosphoserine" evidence="34">
    <location>
        <position position="428"/>
    </location>
</feature>
<feature type="modified residue" description="Phosphoserine" evidence="19">
    <location>
        <position position="437"/>
    </location>
</feature>
<feature type="modified residue" description="Phosphoserine" evidence="19 35">
    <location>
        <position position="639"/>
    </location>
</feature>
<feature type="splice variant" id="VSP_043559" description="In isoform 2." evidence="29">
    <original>MNHL</original>
    <variation>MLTHRPQEAEQRGRTPGPSFEW</variation>
    <location>
        <begin position="1"/>
        <end position="4"/>
    </location>
</feature>
<feature type="splice variant" id="VSP_046127" description="In isoform 4." evidence="29">
    <original>MNHL</original>
    <variation>MQGK</variation>
    <location>
        <begin position="1"/>
        <end position="4"/>
    </location>
</feature>
<feature type="splice variant" id="VSP_046748" description="In isoform 5." evidence="29">
    <original>MNHL</original>
    <variation>ME</variation>
    <location>
        <begin position="1"/>
        <end position="4"/>
    </location>
</feature>
<feature type="splice variant" id="VSP_046749" description="In isoform 6." evidence="29">
    <original>MNHL</original>
    <variation>MPAKPFLSSVLLSWKVLDFSGPGPQGTGQPCSCGHWAEGQGGPPEPAGGP</variation>
    <location>
        <begin position="1"/>
        <end position="4"/>
    </location>
</feature>
<feature type="splice variant" id="VSP_046750" description="In isoform 7." evidence="29">
    <original>MNHL</original>
    <variation>MHCPGEAPLAAPRPTPKDPCLR</variation>
    <location>
        <begin position="1"/>
        <end position="4"/>
    </location>
</feature>
<feature type="splice variant" id="VSP_046751" description="In isoform 8." evidence="29">
    <original>MNHL</original>
    <variation>MSVP</variation>
    <location>
        <begin position="1"/>
        <end position="4"/>
    </location>
</feature>
<feature type="splice variant" id="VSP_046128" description="In isoform 4." evidence="29">
    <location>
        <begin position="64"/>
        <end position="211"/>
    </location>
</feature>
<feature type="splice variant" id="VSP_045355" description="In isoform 3." evidence="30">
    <original>A</original>
    <variation>AVSKCQGNARARLRLWGVW</variation>
    <location>
        <position position="304"/>
    </location>
</feature>
<feature type="sequence variant" id="VAR_058970" description="In dbSNP:rs1035539." evidence="9 13 26 27">
    <original>P</original>
    <variation>S</variation>
    <location>
        <position position="76"/>
    </location>
</feature>
<feature type="sequence variant" id="VAR_035798" description="In a breast cancer sample; somatic mutation; dbSNP:rs144989936." evidence="14">
    <original>S</original>
    <variation>T</variation>
    <location>
        <position position="407"/>
    </location>
</feature>
<feature type="sequence variant" id="VAR_057820" description="In dbSNP:rs16957558.">
    <original>R</original>
    <variation>L</variation>
    <location>
        <position position="491"/>
    </location>
</feature>
<feature type="sequence variant" id="VAR_057821" description="In dbSNP:rs16957552.">
    <original>H</original>
    <variation>R</variation>
    <location>
        <position position="558"/>
    </location>
</feature>
<feature type="mutagenesis site" description="Weakens interaction with SH2D3C." evidence="22">
    <original>L</original>
    <variation>E</variation>
    <location>
        <position position="787"/>
    </location>
</feature>
<feature type="mutagenesis site" description="Weakens interaction with SH2D3C." evidence="22">
    <original>F</original>
    <variation>R</variation>
    <location>
        <position position="794"/>
    </location>
</feature>
<feature type="mutagenesis site" description="Weakens interaction with SH2D3C." evidence="22">
    <original>D</original>
    <variation>R</variation>
    <location>
        <position position="797"/>
    </location>
</feature>
<feature type="sequence conflict" description="In Ref. 5; BAB55230." evidence="31" ref="5">
    <original>L</original>
    <variation>S</variation>
    <location>
        <position position="63"/>
    </location>
</feature>
<feature type="sequence conflict" description="In Ref. 2; AAF27527." evidence="31" ref="2">
    <original>I</original>
    <variation>T</variation>
    <location>
        <position position="236"/>
    </location>
</feature>
<feature type="sequence conflict" description="In Ref. 5; BAG54099." evidence="31" ref="5">
    <original>V</original>
    <variation>I</variation>
    <location>
        <position position="254"/>
    </location>
</feature>
<feature type="sequence conflict" description="In Ref. 2; AAF27527." evidence="31" ref="2">
    <original>A</original>
    <variation>G</variation>
    <location>
        <position position="349"/>
    </location>
</feature>
<feature type="sequence conflict" description="In Ref. 2; AAF27527." evidence="31" ref="2">
    <original>D</original>
    <variation>Y</variation>
    <location>
        <position position="363"/>
    </location>
</feature>
<feature type="sequence conflict" description="In Ref. 4; AAS48631." evidence="31" ref="4">
    <original>T</original>
    <variation>A</variation>
    <location>
        <position position="385"/>
    </location>
</feature>
<feature type="sequence conflict" description="In Ref. 5; BAB55230." evidence="31" ref="5">
    <original>S</original>
    <variation>P</variation>
    <location>
        <position position="428"/>
    </location>
</feature>
<feature type="sequence conflict" description="In Ref. 5; BAB55230." evidence="31" ref="5">
    <original>S</original>
    <variation>G</variation>
    <location>
        <position position="471"/>
    </location>
</feature>
<feature type="sequence conflict" description="In Ref. 4; AAS48631." evidence="31" ref="4">
    <original>N</original>
    <variation>S</variation>
    <location>
        <position position="600"/>
    </location>
</feature>
<feature type="sequence conflict" description="In Ref. 5; BAH13763." evidence="31" ref="5">
    <original>Q</original>
    <variation>R</variation>
    <location>
        <position position="700"/>
    </location>
</feature>
<feature type="sequence conflict" description="In Ref. 5; BAG54099." evidence="31" ref="5">
    <original>P</original>
    <variation>L</variation>
    <location>
        <position position="714"/>
    </location>
</feature>
<feature type="sequence conflict" description="In Ref. 4; AAS48631." evidence="31" ref="4">
    <original>D</original>
    <variation>G</variation>
    <location>
        <position position="740"/>
    </location>
</feature>
<feature type="strand" evidence="36">
    <location>
        <begin position="5"/>
        <end position="12"/>
    </location>
</feature>
<feature type="strand" evidence="36">
    <location>
        <begin position="29"/>
        <end position="34"/>
    </location>
</feature>
<feature type="helix" evidence="36">
    <location>
        <begin position="37"/>
        <end position="39"/>
    </location>
</feature>
<feature type="strand" evidence="36">
    <location>
        <begin position="43"/>
        <end position="48"/>
    </location>
</feature>
<feature type="strand" evidence="36">
    <location>
        <begin position="51"/>
        <end position="56"/>
    </location>
</feature>
<feature type="helix" evidence="36">
    <location>
        <begin position="57"/>
        <end position="59"/>
    </location>
</feature>
<feature type="strand" evidence="36">
    <location>
        <begin position="60"/>
        <end position="68"/>
    </location>
</feature>
<feature type="helix" evidence="37">
    <location>
        <begin position="740"/>
        <end position="770"/>
    </location>
</feature>
<feature type="helix" evidence="37">
    <location>
        <begin position="775"/>
        <end position="801"/>
    </location>
</feature>
<feature type="helix" evidence="37">
    <location>
        <begin position="806"/>
        <end position="835"/>
    </location>
</feature>
<feature type="helix" evidence="37">
    <location>
        <begin position="840"/>
        <end position="870"/>
    </location>
</feature>
<proteinExistence type="evidence at protein level"/>
<comment type="function">
    <text evidence="2 11 12 15">Docking protein which plays a central coordinating role for tyrosine kinase-based signaling related to cell adhesion (PubMed:12432078, PubMed:12832404). Implicated in induction of cell migration and cell branching (PubMed:12432078, PubMed:12832404, PubMed:17038317). Involved in the BCAR3-mediated inhibition of TGFB signaling (By similarity).</text>
</comment>
<comment type="subunit">
    <text evidence="2 7 8 10 11 12 15 16 17 19 20 21 22 24 25">Forms complexes in vivo with PTK2/FAK1, adapter protein CRKL and LYN kinase (PubMed:9020138). Heterodimerizes with NEDD9 (PubMed:10502414). Component of a complex comprised of SH2D3C, BCAR1/CAS, and CRK (PubMed:12432078). Within the complex, interacts with SH2D3C (via C-terminus), and CRK (PubMed:12432078, PubMed:17174122). Part of a complex comprised of PTPRA, BCAR1, BCAR3 (via SH2 domain) and SRC; the formation of the complex is dependent on integrin mediated-tyrosine phosphorylation of PTPRA (PubMed:22801373). Interacts with BCAR3 (via Ras-GEF domain); the interaction regulates adhesion-dependent serine phosphorylation (PubMed:22081014). Interacts with SMAD2 and SMAD3 (By similarity). Interacts with NPHP1 (By similarity). Interacts with PTK2B/PYK2 (PubMed:19086031, PubMed:9020138). Interacts (via C-terminus) with SH2D3C/CHAT isoform 2 (via C-terminus) (PubMed:17174122, PubMed:22081014). Interacts with activated CSPG4. Interacts with BMX, INPPL1/SHIP2 and PEAK1. Part of a collagen-stimulated complex involved in cell migration made of CDC42, CRK, TNK2 and BCAR1/p130cas. Interacts with TNK2 via SH3 domains. Interacts (when tyrosine-phosphorylated) with tensin TNS1; the interaction is increased by phosphorylation of TNS1 (PubMed:20798394).</text>
</comment>
<comment type="interaction">
    <interactant intactId="EBI-702093">
        <id>P56945</id>
    </interactant>
    <interactant intactId="EBI-11954519">
        <id>Q49AR9</id>
        <label>ANKS1A</label>
    </interactant>
    <organismsDiffer>false</organismsDiffer>
    <experiments>3</experiments>
</comment>
<comment type="interaction">
    <interactant intactId="EBI-702093">
        <id>P56945</id>
    </interactant>
    <interactant intactId="EBI-15953103">
        <id>O75815-1</id>
        <label>BCAR3</label>
    </interactant>
    <organismsDiffer>false</organismsDiffer>
    <experiments>3</experiments>
</comment>
<comment type="interaction">
    <interactant intactId="EBI-702093">
        <id>P56945</id>
    </interactant>
    <interactant intactId="EBI-359063">
        <id>P53618</id>
        <label>COPB1</label>
    </interactant>
    <organismsDiffer>false</organismsDiffer>
    <experiments>3</experiments>
</comment>
<comment type="interaction">
    <interactant intactId="EBI-702093">
        <id>P56945</id>
    </interactant>
    <interactant intactId="EBI-886">
        <id>P46108</id>
        <label>CRK</label>
    </interactant>
    <organismsDiffer>false</organismsDiffer>
    <experiments>7</experiments>
</comment>
<comment type="interaction">
    <interactant intactId="EBI-702093">
        <id>P56945</id>
    </interactant>
    <interactant intactId="EBI-11980989">
        <id>Q5T9C2-3</id>
        <label>EEIG1</label>
    </interactant>
    <organismsDiffer>false</organismsDiffer>
    <experiments>3</experiments>
</comment>
<comment type="interaction">
    <interactant intactId="EBI-702093">
        <id>P56945</id>
    </interactant>
    <interactant intactId="EBI-6658203">
        <id>Q86YD7</id>
        <label>FAM90A1</label>
    </interactant>
    <organismsDiffer>false</organismsDiffer>
    <experiments>3</experiments>
</comment>
<comment type="interaction">
    <interactant intactId="EBI-702093">
        <id>P56945</id>
    </interactant>
    <interactant intactId="EBI-515315">
        <id>P06241</id>
        <label>FYN</label>
    </interactant>
    <organismsDiffer>false</organismsDiffer>
    <experiments>4</experiments>
</comment>
<comment type="interaction">
    <interactant intactId="EBI-702093">
        <id>P56945</id>
    </interactant>
    <interactant intactId="EBI-10691738">
        <id>P06241-3</id>
        <label>FYN</label>
    </interactant>
    <organismsDiffer>false</organismsDiffer>
    <experiments>3</experiments>
</comment>
<comment type="interaction">
    <interactant intactId="EBI-702093">
        <id>P56945</id>
    </interactant>
    <interactant intactId="EBI-7251368">
        <id>Q9BZE0</id>
        <label>GLIS2</label>
    </interactant>
    <organismsDiffer>false</organismsDiffer>
    <experiments>3</experiments>
</comment>
<comment type="interaction">
    <interactant intactId="EBI-702093">
        <id>P56945</id>
    </interactant>
    <interactant intactId="EBI-1384248">
        <id>O15357</id>
        <label>INPPL1</label>
    </interactant>
    <organismsDiffer>false</organismsDiffer>
    <experiments>2</experiments>
</comment>
<comment type="interaction">
    <interactant intactId="EBI-702093">
        <id>P56945</id>
    </interactant>
    <interactant intactId="EBI-297509">
        <id>P46940</id>
        <label>IQGAP1</label>
    </interactant>
    <organismsDiffer>false</organismsDiffer>
    <experiments>4</experiments>
</comment>
<comment type="interaction">
    <interactant intactId="EBI-702093">
        <id>P56945</id>
    </interactant>
    <interactant intactId="EBI-992788">
        <id>P50281</id>
        <label>MMP14</label>
    </interactant>
    <organismsDiffer>false</organismsDiffer>
    <experiments>3</experiments>
</comment>
<comment type="interaction">
    <interactant intactId="EBI-702093">
        <id>P56945</id>
    </interactant>
    <interactant intactId="EBI-713635">
        <id>O43639</id>
        <label>NCK2</label>
    </interactant>
    <organismsDiffer>false</organismsDiffer>
    <experiments>3</experiments>
</comment>
<comment type="interaction">
    <interactant intactId="EBI-702093">
        <id>P56945</id>
    </interactant>
    <interactant intactId="EBI-2609701">
        <id>Q9H792</id>
        <label>PEAK1</label>
    </interactant>
    <organismsDiffer>false</organismsDiffer>
    <experiments>3</experiments>
</comment>
<comment type="interaction">
    <interactant intactId="EBI-702093">
        <id>P56945</id>
    </interactant>
    <interactant intactId="EBI-2860740">
        <id>Q96QH2</id>
        <label>PRAM1</label>
    </interactant>
    <organismsDiffer>false</organismsDiffer>
    <experiments>3</experiments>
</comment>
<comment type="interaction">
    <interactant intactId="EBI-702093">
        <id>P56945</id>
    </interactant>
    <interactant intactId="EBI-702142">
        <id>Q05397</id>
        <label>PTK2</label>
    </interactant>
    <organismsDiffer>false</organismsDiffer>
    <experiments>2</experiments>
</comment>
<comment type="interaction">
    <interactant intactId="EBI-702093">
        <id>P56945</id>
    </interactant>
    <interactant intactId="EBI-968788">
        <id>P18031</id>
        <label>PTPN1</label>
    </interactant>
    <organismsDiffer>false</organismsDiffer>
    <experiments>5</experiments>
</comment>
<comment type="interaction">
    <interactant intactId="EBI-702093">
        <id>P56945</id>
    </interactant>
    <interactant intactId="EBI-2266035">
        <id>Q05209</id>
        <label>PTPN12</label>
    </interactant>
    <organismsDiffer>false</organismsDiffer>
    <experiments>5</experiments>
</comment>
<comment type="interaction">
    <interactant intactId="EBI-702093">
        <id>P56945</id>
    </interactant>
    <interactant intactId="EBI-745980">
        <id>Q8N5H7</id>
        <label>SH2D3C</label>
    </interactant>
    <organismsDiffer>false</organismsDiffer>
    <experiments>2</experiments>
</comment>
<comment type="interaction">
    <interactant intactId="EBI-702093">
        <id>P56945</id>
    </interactant>
    <interactant intactId="EBI-15952996">
        <id>Q8N5H7-2</id>
        <label>SH2D3C</label>
    </interactant>
    <organismsDiffer>false</organismsDiffer>
    <experiments>8</experiments>
</comment>
<comment type="interaction">
    <interactant intactId="EBI-702093">
        <id>P56945</id>
    </interactant>
    <interactant intactId="EBI-621482">
        <id>P12931</id>
        <label>SRC</label>
    </interactant>
    <organismsDiffer>false</organismsDiffer>
    <experiments>3</experiments>
</comment>
<comment type="interaction">
    <interactant intactId="EBI-702093">
        <id>P56945</id>
    </interactant>
    <interactant intactId="EBI-1393949">
        <id>Q9C0H9</id>
        <label>SRCIN1</label>
    </interactant>
    <organismsDiffer>false</organismsDiffer>
    <experiments>3</experiments>
</comment>
<comment type="interaction">
    <interactant intactId="EBI-702093">
        <id>P56945</id>
    </interactant>
    <interactant intactId="EBI-603457">
        <id>Q07912</id>
        <label>TNK2</label>
    </interactant>
    <organismsDiffer>false</organismsDiffer>
    <experiments>5</experiments>
</comment>
<comment type="interaction">
    <interactant intactId="EBI-702093">
        <id>P56945</id>
    </interactant>
    <interactant intactId="EBI-1220488">
        <id>Q68CZ2</id>
        <label>TNS3</label>
    </interactant>
    <organismsDiffer>false</organismsDiffer>
    <experiments>8</experiments>
</comment>
<comment type="interaction">
    <interactant intactId="EBI-702093">
        <id>P56945</id>
    </interactant>
    <interactant intactId="EBI-743272">
        <id>O75604</id>
        <label>USP2</label>
    </interactant>
    <organismsDiffer>false</organismsDiffer>
    <experiments>3</experiments>
</comment>
<comment type="interaction">
    <interactant intactId="EBI-702093">
        <id>P56945</id>
    </interactant>
    <interactant intactId="EBI-11027067">
        <id>P18206-2</id>
        <label>VCL</label>
    </interactant>
    <organismsDiffer>false</organismsDiffer>
    <experiments>3</experiments>
</comment>
<comment type="interaction">
    <interactant intactId="EBI-702093">
        <id>P56945</id>
    </interactant>
    <interactant intactId="EBI-515331">
        <id>P07947</id>
        <label>YES1</label>
    </interactant>
    <organismsDiffer>false</organismsDiffer>
    <experiments>3</experiments>
</comment>
<comment type="interaction">
    <interactant intactId="EBI-702093">
        <id>P56945</id>
    </interactant>
    <interactant intactId="EBI-775592">
        <id>Q9QWI6</id>
        <label>Srcin1</label>
    </interactant>
    <organismsDiffer>true</organismsDiffer>
    <experiments>3</experiments>
</comment>
<comment type="interaction">
    <interactant intactId="EBI-702093">
        <id>P56945</id>
    </interactant>
    <interactant intactId="EBI-2607590">
        <id>Q04205</id>
        <label>TNS1</label>
    </interactant>
    <organismsDiffer>true</organismsDiffer>
    <experiments>2</experiments>
</comment>
<comment type="subcellular location">
    <subcellularLocation>
        <location evidence="12">Cell junction</location>
        <location evidence="12">Focal adhesion</location>
    </subcellularLocation>
    <subcellularLocation>
        <location evidence="12">Cytoplasm</location>
    </subcellularLocation>
    <subcellularLocation>
        <location evidence="2">Cell projection</location>
        <location evidence="2">Axon</location>
    </subcellularLocation>
    <text evidence="2">Unphosphorylated form localizes in the cytoplasm (By similarity). Localizes to focal adhesion sites following integrin engagement (By similarity).</text>
</comment>
<comment type="alternative products">
    <event type="alternative splicing"/>
    <isoform>
        <id>P56945-1</id>
        <name>1</name>
        <sequence type="displayed"/>
    </isoform>
    <isoform>
        <id>P56945-2</id>
        <name>2</name>
        <sequence type="described" ref="VSP_043559"/>
    </isoform>
    <isoform>
        <id>P56945-3</id>
        <name>3</name>
        <sequence type="described" ref="VSP_045355"/>
    </isoform>
    <isoform>
        <id>P56945-4</id>
        <name>4</name>
        <sequence type="described" ref="VSP_046127 VSP_046128"/>
    </isoform>
    <isoform>
        <id>P56945-5</id>
        <name>5</name>
        <sequence type="described" ref="VSP_046748"/>
    </isoform>
    <isoform>
        <id>P56945-6</id>
        <name>6</name>
        <sequence type="described" ref="VSP_046749"/>
    </isoform>
    <isoform>
        <id>P56945-7</id>
        <name>7</name>
        <sequence type="described" ref="VSP_046750"/>
    </isoform>
    <isoform>
        <id>P56945-8</id>
        <name>8</name>
        <sequence type="described" ref="VSP_046751"/>
    </isoform>
</comment>
<comment type="tissue specificity">
    <text evidence="9 25">Expressed in B-cells (at protein level) (PubMed:9020138). Widely expressed with an abundant expression in the testis (PubMed:10639512). Low level of expression seen in the liver, thymus, and peripheral blood leukocytes (PubMed:10639512).</text>
</comment>
<comment type="domain">
    <text evidence="1">Contains a central domain (substrate domain) containing multiple potential SH2-binding sites and a C-terminal domain containing a divergent helix-loop-helix (HLH) motif. The SH2-binding sites putatively bind CRK, NCK and ABL1 SH2 domains. The HLH motif is absolutely required for the induction of pseudohyphal growth in yeast and mediates heterodimerization with NEDD9 (By similarity).</text>
</comment>
<comment type="domain">
    <text>A serine-rich region promotes activation of the serum response element (SRE).</text>
</comment>
<comment type="domain">
    <text>The SH3 domain is necessary for the localization of the protein to focal adhesions and interacts with one proline-rich region of PTK2/FAK11.</text>
</comment>
<comment type="PTM">
    <text evidence="12 18 19 23">PTK2/FAK1 activation mediates phosphorylation at the YDYVHL motif; phosphorylation is most likely catalyzed by SRC family members. SRC-family kinases are recruited to the phosphorylated sites and can phosphorylate other tyrosine residues. Tyrosine phosphorylation is triggered by integrin-mediated adhesion of cells to the extracellular matrix.</text>
</comment>
<comment type="PTM">
    <text>Dephosphorylated by PTPN14 at Tyr-128.</text>
</comment>
<comment type="PTM">
    <text evidence="17">Phosphorylated by SRC kinase in a EDN1- and PTK2B-mediated manner; phosphorylation strengthens its interaction with BCAR3 as part of the PTK2B/BCAR1/BCAR3/RAP1 signaling pathway.</text>
</comment>
<comment type="similarity">
    <text evidence="31">Belongs to the CAS family.</text>
</comment>
<comment type="online information" name="Atlas of Genetics and Cytogenetics in Oncology and Haematology">
    <link uri="https://atlasgeneticsoncology.org/gene/761/BCAR1"/>
</comment>
<dbReference type="EMBL" id="AJ242987">
    <property type="protein sequence ID" value="CAB75875.2"/>
    <property type="molecule type" value="mRNA"/>
</dbReference>
<dbReference type="EMBL" id="AF218451">
    <property type="protein sequence ID" value="AAF27527.1"/>
    <property type="molecule type" value="mRNA"/>
</dbReference>
<dbReference type="EMBL" id="AB040024">
    <property type="protein sequence ID" value="BAA92711.1"/>
    <property type="molecule type" value="mRNA"/>
</dbReference>
<dbReference type="EMBL" id="AY545071">
    <property type="protein sequence ID" value="AAS48631.1"/>
    <property type="molecule type" value="mRNA"/>
</dbReference>
<dbReference type="EMBL" id="AK027608">
    <property type="protein sequence ID" value="BAB55230.1"/>
    <property type="molecule type" value="mRNA"/>
</dbReference>
<dbReference type="EMBL" id="AK124815">
    <property type="protein sequence ID" value="BAG54099.1"/>
    <property type="molecule type" value="mRNA"/>
</dbReference>
<dbReference type="EMBL" id="AK293808">
    <property type="protein sequence ID" value="BAG57215.1"/>
    <property type="molecule type" value="mRNA"/>
</dbReference>
<dbReference type="EMBL" id="AK294513">
    <property type="protein sequence ID" value="BAG57726.1"/>
    <property type="molecule type" value="mRNA"/>
</dbReference>
<dbReference type="EMBL" id="AK295809">
    <property type="protein sequence ID" value="BAG58627.1"/>
    <property type="molecule type" value="mRNA"/>
</dbReference>
<dbReference type="EMBL" id="AK302617">
    <property type="protein sequence ID" value="BAH13763.1"/>
    <property type="molecule type" value="mRNA"/>
</dbReference>
<dbReference type="EMBL" id="AC009078">
    <property type="status" value="NOT_ANNOTATED_CDS"/>
    <property type="molecule type" value="Genomic_DNA"/>
</dbReference>
<dbReference type="CCDS" id="CCDS10915.1">
    <molecule id="P56945-1"/>
</dbReference>
<dbReference type="CCDS" id="CCDS54037.1">
    <molecule id="P56945-5"/>
</dbReference>
<dbReference type="CCDS" id="CCDS54038.1">
    <molecule id="P56945-3"/>
</dbReference>
<dbReference type="CCDS" id="CCDS54039.1">
    <molecule id="P56945-4"/>
</dbReference>
<dbReference type="CCDS" id="CCDS54040.1">
    <molecule id="P56945-6"/>
</dbReference>
<dbReference type="CCDS" id="CCDS54041.1">
    <molecule id="P56945-8"/>
</dbReference>
<dbReference type="CCDS" id="CCDS54042.1">
    <molecule id="P56945-2"/>
</dbReference>
<dbReference type="CCDS" id="CCDS54043.1">
    <molecule id="P56945-7"/>
</dbReference>
<dbReference type="RefSeq" id="NP_001164185.1">
    <molecule id="P56945-6"/>
    <property type="nucleotide sequence ID" value="NM_001170714.3"/>
</dbReference>
<dbReference type="RefSeq" id="NP_001164186.1">
    <molecule id="P56945-7"/>
    <property type="nucleotide sequence ID" value="NM_001170715.3"/>
</dbReference>
<dbReference type="RefSeq" id="NP_001164187.1">
    <molecule id="P56945-2"/>
    <property type="nucleotide sequence ID" value="NM_001170716.3"/>
</dbReference>
<dbReference type="RefSeq" id="NP_001164188.1">
    <molecule id="P56945-3"/>
    <property type="nucleotide sequence ID" value="NM_001170717.3"/>
</dbReference>
<dbReference type="RefSeq" id="NP_001164189.1">
    <molecule id="P56945-8"/>
    <property type="nucleotide sequence ID" value="NM_001170718.3"/>
</dbReference>
<dbReference type="RefSeq" id="NP_001164190.1">
    <molecule id="P56945-5"/>
    <property type="nucleotide sequence ID" value="NM_001170719.3"/>
</dbReference>
<dbReference type="RefSeq" id="NP_001164191.1">
    <molecule id="P56945-4"/>
    <property type="nucleotide sequence ID" value="NM_001170720.3"/>
</dbReference>
<dbReference type="RefSeq" id="NP_055382.2">
    <molecule id="P56945-1"/>
    <property type="nucleotide sequence ID" value="NM_014567.3"/>
</dbReference>
<dbReference type="RefSeq" id="XP_016879386.1">
    <property type="nucleotide sequence ID" value="XM_017023897.1"/>
</dbReference>
<dbReference type="PDB" id="1WYX">
    <property type="method" value="X-ray"/>
    <property type="resolution" value="1.14 A"/>
    <property type="chains" value="A/B=3-71"/>
</dbReference>
<dbReference type="PDB" id="3T6G">
    <property type="method" value="X-ray"/>
    <property type="resolution" value="2.50 A"/>
    <property type="chains" value="B/D=645-870"/>
</dbReference>
<dbReference type="PDB" id="5O2M">
    <property type="method" value="NMR"/>
    <property type="chains" value="A=4-73"/>
</dbReference>
<dbReference type="PDB" id="5O2P">
    <property type="method" value="NMR"/>
    <property type="chains" value="A=4-73"/>
</dbReference>
<dbReference type="PDB" id="5O2Q">
    <property type="method" value="NMR"/>
    <property type="chains" value="A=4-73"/>
</dbReference>
<dbReference type="PDBsum" id="1WYX"/>
<dbReference type="PDBsum" id="3T6G"/>
<dbReference type="PDBsum" id="5O2M"/>
<dbReference type="PDBsum" id="5O2P"/>
<dbReference type="PDBsum" id="5O2Q"/>
<dbReference type="SMR" id="P56945"/>
<dbReference type="BioGRID" id="114934">
    <property type="interactions" value="549"/>
</dbReference>
<dbReference type="CORUM" id="P56945"/>
<dbReference type="DIP" id="DIP-33855N"/>
<dbReference type="ELM" id="P56945"/>
<dbReference type="FunCoup" id="P56945">
    <property type="interactions" value="1368"/>
</dbReference>
<dbReference type="IntAct" id="P56945">
    <property type="interactions" value="273"/>
</dbReference>
<dbReference type="MINT" id="P56945"/>
<dbReference type="STRING" id="9606.ENSP00000391669"/>
<dbReference type="GlyGen" id="P56945">
    <property type="glycosylation" value="4 sites, 1 O-linked glycan (2 sites)"/>
</dbReference>
<dbReference type="iPTMnet" id="P56945"/>
<dbReference type="PhosphoSitePlus" id="P56945"/>
<dbReference type="BioMuta" id="BCAR1"/>
<dbReference type="DMDM" id="288558806"/>
<dbReference type="jPOST" id="P56945"/>
<dbReference type="MassIVE" id="P56945"/>
<dbReference type="PaxDb" id="9606-ENSP00000391669"/>
<dbReference type="PeptideAtlas" id="P56945"/>
<dbReference type="ProteomicsDB" id="19466"/>
<dbReference type="ProteomicsDB" id="19521"/>
<dbReference type="ProteomicsDB" id="24360"/>
<dbReference type="ProteomicsDB" id="24539"/>
<dbReference type="ProteomicsDB" id="27632"/>
<dbReference type="ProteomicsDB" id="30445"/>
<dbReference type="ProteomicsDB" id="56960">
    <molecule id="P56945-1"/>
</dbReference>
<dbReference type="ProteomicsDB" id="56961">
    <molecule id="P56945-2"/>
</dbReference>
<dbReference type="Pumba" id="P56945"/>
<dbReference type="ABCD" id="P56945">
    <property type="antibodies" value="2 sequenced antibodies"/>
</dbReference>
<dbReference type="Antibodypedia" id="3607">
    <property type="antibodies" value="860 antibodies from 41 providers"/>
</dbReference>
<dbReference type="DNASU" id="9564"/>
<dbReference type="Ensembl" id="ENST00000162330.10">
    <molecule id="P56945-1"/>
    <property type="protein sequence ID" value="ENSP00000162330.5"/>
    <property type="gene ID" value="ENSG00000050820.17"/>
</dbReference>
<dbReference type="Ensembl" id="ENST00000393420.10">
    <molecule id="P56945-3"/>
    <property type="protein sequence ID" value="ENSP00000377072.6"/>
    <property type="gene ID" value="ENSG00000050820.17"/>
</dbReference>
<dbReference type="Ensembl" id="ENST00000393422.6">
    <molecule id="P56945-7"/>
    <property type="protein sequence ID" value="ENSP00000377074.2"/>
    <property type="gene ID" value="ENSG00000050820.17"/>
</dbReference>
<dbReference type="Ensembl" id="ENST00000418647.7">
    <molecule id="P56945-6"/>
    <property type="protein sequence ID" value="ENSP00000391669.3"/>
    <property type="gene ID" value="ENSG00000050820.17"/>
</dbReference>
<dbReference type="Ensembl" id="ENST00000420641.7">
    <molecule id="P56945-2"/>
    <property type="protein sequence ID" value="ENSP00000392708.3"/>
    <property type="gene ID" value="ENSG00000050820.17"/>
</dbReference>
<dbReference type="Ensembl" id="ENST00000535626.6">
    <molecule id="P56945-4"/>
    <property type="protein sequence ID" value="ENSP00000440370.2"/>
    <property type="gene ID" value="ENSG00000050820.17"/>
</dbReference>
<dbReference type="Ensembl" id="ENST00000538440.6">
    <molecule id="P56945-8"/>
    <property type="protein sequence ID" value="ENSP00000443841.2"/>
    <property type="gene ID" value="ENSG00000050820.17"/>
</dbReference>
<dbReference type="Ensembl" id="ENST00000542031.6">
    <molecule id="P56945-5"/>
    <property type="protein sequence ID" value="ENSP00000440415.2"/>
    <property type="gene ID" value="ENSG00000050820.17"/>
</dbReference>
<dbReference type="GeneID" id="9564"/>
<dbReference type="KEGG" id="hsa:9564"/>
<dbReference type="MANE-Select" id="ENST00000162330.10">
    <property type="protein sequence ID" value="ENSP00000162330.5"/>
    <property type="RefSeq nucleotide sequence ID" value="NM_014567.5"/>
    <property type="RefSeq protein sequence ID" value="NP_055382.2"/>
</dbReference>
<dbReference type="UCSC" id="uc002fdv.4">
    <molecule id="P56945-1"/>
    <property type="organism name" value="human"/>
</dbReference>
<dbReference type="AGR" id="HGNC:971"/>
<dbReference type="CTD" id="9564"/>
<dbReference type="DisGeNET" id="9564"/>
<dbReference type="GeneCards" id="BCAR1"/>
<dbReference type="HGNC" id="HGNC:971">
    <property type="gene designation" value="BCAR1"/>
</dbReference>
<dbReference type="HPA" id="ENSG00000050820">
    <property type="expression patterns" value="Low tissue specificity"/>
</dbReference>
<dbReference type="MIM" id="602941">
    <property type="type" value="gene"/>
</dbReference>
<dbReference type="neXtProt" id="NX_P56945"/>
<dbReference type="OpenTargets" id="ENSG00000050820"/>
<dbReference type="PharmGKB" id="PA25281"/>
<dbReference type="VEuPathDB" id="HostDB:ENSG00000050820"/>
<dbReference type="eggNOG" id="ENOG502QQHE">
    <property type="taxonomic scope" value="Eukaryota"/>
</dbReference>
<dbReference type="GeneTree" id="ENSGT00950000183008"/>
<dbReference type="HOGENOM" id="CLU_017000_1_0_1"/>
<dbReference type="InParanoid" id="P56945"/>
<dbReference type="OMA" id="MTPHRPA"/>
<dbReference type="OrthoDB" id="5983572at2759"/>
<dbReference type="PAN-GO" id="P56945">
    <property type="GO annotations" value="6 GO annotations based on evolutionary models"/>
</dbReference>
<dbReference type="PhylomeDB" id="P56945"/>
<dbReference type="TreeFam" id="TF328782"/>
<dbReference type="PathwayCommons" id="P56945"/>
<dbReference type="Reactome" id="R-HSA-186763">
    <property type="pathway name" value="Downstream signal transduction"/>
</dbReference>
<dbReference type="Reactome" id="R-HSA-372708">
    <property type="pathway name" value="p130Cas linkage to MAPK signaling for integrins"/>
</dbReference>
<dbReference type="Reactome" id="R-HSA-4420097">
    <property type="pathway name" value="VEGFA-VEGFR2 Pathway"/>
</dbReference>
<dbReference type="Reactome" id="R-HSA-8849471">
    <property type="pathway name" value="PTK6 Regulates RHO GTPases, RAS GTPase and MAP kinases"/>
</dbReference>
<dbReference type="SignaLink" id="P56945"/>
<dbReference type="SIGNOR" id="P56945"/>
<dbReference type="BioGRID-ORCS" id="9564">
    <property type="hits" value="303 hits in 1160 CRISPR screens"/>
</dbReference>
<dbReference type="ChiTaRS" id="BCAR1">
    <property type="organism name" value="human"/>
</dbReference>
<dbReference type="EvolutionaryTrace" id="P56945"/>
<dbReference type="GeneWiki" id="BCAR1"/>
<dbReference type="GenomeRNAi" id="9564"/>
<dbReference type="Pharos" id="P56945">
    <property type="development level" value="Tbio"/>
</dbReference>
<dbReference type="PRO" id="PR:P56945"/>
<dbReference type="Proteomes" id="UP000005640">
    <property type="component" value="Chromosome 16"/>
</dbReference>
<dbReference type="RNAct" id="P56945">
    <property type="molecule type" value="protein"/>
</dbReference>
<dbReference type="Bgee" id="ENSG00000050820">
    <property type="expression patterns" value="Expressed in right hemisphere of cerebellum and 97 other cell types or tissues"/>
</dbReference>
<dbReference type="ExpressionAtlas" id="P56945">
    <property type="expression patterns" value="baseline and differential"/>
</dbReference>
<dbReference type="GO" id="GO:0015629">
    <property type="term" value="C:actin cytoskeleton"/>
    <property type="evidence" value="ECO:0007669"/>
    <property type="project" value="Ensembl"/>
</dbReference>
<dbReference type="GO" id="GO:0030424">
    <property type="term" value="C:axon"/>
    <property type="evidence" value="ECO:0007669"/>
    <property type="project" value="UniProtKB-SubCell"/>
</dbReference>
<dbReference type="GO" id="GO:0005737">
    <property type="term" value="C:cytoplasm"/>
    <property type="evidence" value="ECO:0000314"/>
    <property type="project" value="UniProtKB"/>
</dbReference>
<dbReference type="GO" id="GO:0005829">
    <property type="term" value="C:cytosol"/>
    <property type="evidence" value="ECO:0000304"/>
    <property type="project" value="Reactome"/>
</dbReference>
<dbReference type="GO" id="GO:0005925">
    <property type="term" value="C:focal adhesion"/>
    <property type="evidence" value="ECO:0000314"/>
    <property type="project" value="BHF-UCL"/>
</dbReference>
<dbReference type="GO" id="GO:0030027">
    <property type="term" value="C:lamellipodium"/>
    <property type="evidence" value="ECO:0007669"/>
    <property type="project" value="Ensembl"/>
</dbReference>
<dbReference type="GO" id="GO:0016020">
    <property type="term" value="C:membrane"/>
    <property type="evidence" value="ECO:0007669"/>
    <property type="project" value="Ensembl"/>
</dbReference>
<dbReference type="GO" id="GO:0001726">
    <property type="term" value="C:ruffle"/>
    <property type="evidence" value="ECO:0000314"/>
    <property type="project" value="UniProtKB"/>
</dbReference>
<dbReference type="GO" id="GO:0019901">
    <property type="term" value="F:protein kinase binding"/>
    <property type="evidence" value="ECO:0000353"/>
    <property type="project" value="UniProtKB"/>
</dbReference>
<dbReference type="GO" id="GO:0017124">
    <property type="term" value="F:SH3 domain binding"/>
    <property type="evidence" value="ECO:0007669"/>
    <property type="project" value="UniProtKB-KW"/>
</dbReference>
<dbReference type="GO" id="GO:0007015">
    <property type="term" value="P:actin filament organization"/>
    <property type="evidence" value="ECO:0000314"/>
    <property type="project" value="UniProtKB"/>
</dbReference>
<dbReference type="GO" id="GO:0050851">
    <property type="term" value="P:antigen receptor-mediated signaling pathway"/>
    <property type="evidence" value="ECO:0000314"/>
    <property type="project" value="UniProtKB"/>
</dbReference>
<dbReference type="GO" id="GO:0050853">
    <property type="term" value="P:B cell receptor signaling pathway"/>
    <property type="evidence" value="ECO:0000314"/>
    <property type="project" value="UniProtKB"/>
</dbReference>
<dbReference type="GO" id="GO:0007155">
    <property type="term" value="P:cell adhesion"/>
    <property type="evidence" value="ECO:0007669"/>
    <property type="project" value="UniProtKB-KW"/>
</dbReference>
<dbReference type="GO" id="GO:0060326">
    <property type="term" value="P:cell chemotaxis"/>
    <property type="evidence" value="ECO:0000315"/>
    <property type="project" value="BHF-UCL"/>
</dbReference>
<dbReference type="GO" id="GO:0051301">
    <property type="term" value="P:cell division"/>
    <property type="evidence" value="ECO:0000303"/>
    <property type="project" value="UniProtKB"/>
</dbReference>
<dbReference type="GO" id="GO:0016477">
    <property type="term" value="P:cell migration"/>
    <property type="evidence" value="ECO:0000314"/>
    <property type="project" value="UniProtKB"/>
</dbReference>
<dbReference type="GO" id="GO:0007169">
    <property type="term" value="P:cell surface receptor protein tyrosine kinase signaling pathway"/>
    <property type="evidence" value="ECO:0000318"/>
    <property type="project" value="GO_Central"/>
</dbReference>
<dbReference type="GO" id="GO:0035729">
    <property type="term" value="P:cellular response to hepatocyte growth factor stimulus"/>
    <property type="evidence" value="ECO:0000315"/>
    <property type="project" value="BHF-UCL"/>
</dbReference>
<dbReference type="GO" id="GO:0086100">
    <property type="term" value="P:endothelin receptor signaling pathway"/>
    <property type="evidence" value="ECO:0000314"/>
    <property type="project" value="UniProtKB"/>
</dbReference>
<dbReference type="GO" id="GO:0007173">
    <property type="term" value="P:epidermal growth factor receptor signaling pathway"/>
    <property type="evidence" value="ECO:0000250"/>
    <property type="project" value="UniProtKB"/>
</dbReference>
<dbReference type="GO" id="GO:0007186">
    <property type="term" value="P:G protein-coupled receptor signaling pathway"/>
    <property type="evidence" value="ECO:0000250"/>
    <property type="project" value="UniProtKB"/>
</dbReference>
<dbReference type="GO" id="GO:0048012">
    <property type="term" value="P:hepatocyte growth factor receptor signaling pathway"/>
    <property type="evidence" value="ECO:0000315"/>
    <property type="project" value="BHF-UCL"/>
</dbReference>
<dbReference type="GO" id="GO:0008286">
    <property type="term" value="P:insulin receptor signaling pathway"/>
    <property type="evidence" value="ECO:0000250"/>
    <property type="project" value="UniProtKB"/>
</dbReference>
<dbReference type="GO" id="GO:0007229">
    <property type="term" value="P:integrin-mediated signaling pathway"/>
    <property type="evidence" value="ECO:0000314"/>
    <property type="project" value="UniProtKB"/>
</dbReference>
<dbReference type="GO" id="GO:0048011">
    <property type="term" value="P:neurotrophin TRK receptor signaling pathway"/>
    <property type="evidence" value="ECO:0000250"/>
    <property type="project" value="UniProtKB"/>
</dbReference>
<dbReference type="GO" id="GO:0048008">
    <property type="term" value="P:platelet-derived growth factor receptor signaling pathway"/>
    <property type="evidence" value="ECO:0000250"/>
    <property type="project" value="UniProtKB"/>
</dbReference>
<dbReference type="GO" id="GO:0030335">
    <property type="term" value="P:positive regulation of cell migration"/>
    <property type="evidence" value="ECO:0000314"/>
    <property type="project" value="UniProtKB"/>
</dbReference>
<dbReference type="GO" id="GO:0010595">
    <property type="term" value="P:positive regulation of endothelial cell migration"/>
    <property type="evidence" value="ECO:0000314"/>
    <property type="project" value="BHF-UCL"/>
</dbReference>
<dbReference type="GO" id="GO:0042981">
    <property type="term" value="P:regulation of apoptotic process"/>
    <property type="evidence" value="ECO:0000304"/>
    <property type="project" value="UniProtKB"/>
</dbReference>
<dbReference type="GO" id="GO:0001558">
    <property type="term" value="P:regulation of cell growth"/>
    <property type="evidence" value="ECO:0000304"/>
    <property type="project" value="UniProtKB"/>
</dbReference>
<dbReference type="GO" id="GO:0050852">
    <property type="term" value="P:T cell receptor signaling pathway"/>
    <property type="evidence" value="ECO:0000303"/>
    <property type="project" value="UniProtKB"/>
</dbReference>
<dbReference type="GO" id="GO:0048010">
    <property type="term" value="P:vascular endothelial growth factor receptor signaling pathway"/>
    <property type="evidence" value="ECO:0000315"/>
    <property type="project" value="BHF-UCL"/>
</dbReference>
<dbReference type="CDD" id="cd11569">
    <property type="entry name" value="FAT-like_BCAR1_C"/>
    <property type="match status" value="1"/>
</dbReference>
<dbReference type="CDD" id="cd12001">
    <property type="entry name" value="SH3_BCAR1"/>
    <property type="match status" value="1"/>
</dbReference>
<dbReference type="FunFam" id="1.20.120.830:FF:000001">
    <property type="entry name" value="BCAR1 scaffold protein, Cas family member"/>
    <property type="match status" value="1"/>
</dbReference>
<dbReference type="FunFam" id="1.20.120.230:FF:000001">
    <property type="entry name" value="Breast cancer anti-estrogen resistance 1"/>
    <property type="match status" value="1"/>
</dbReference>
<dbReference type="FunFam" id="2.30.30.40:FF:000009">
    <property type="entry name" value="Breast cancer anti-estrogen resistance 1"/>
    <property type="match status" value="1"/>
</dbReference>
<dbReference type="Gene3D" id="1.20.120.230">
    <property type="entry name" value="Alpha-catenin/vinculin-like"/>
    <property type="match status" value="1"/>
</dbReference>
<dbReference type="Gene3D" id="1.20.120.830">
    <property type="entry name" value="Serine-rich domain"/>
    <property type="match status" value="1"/>
</dbReference>
<dbReference type="Gene3D" id="2.30.30.40">
    <property type="entry name" value="SH3 Domains"/>
    <property type="match status" value="1"/>
</dbReference>
<dbReference type="InterPro" id="IPR046976">
    <property type="entry name" value="BCAR1_C"/>
</dbReference>
<dbReference type="InterPro" id="IPR035745">
    <property type="entry name" value="BCAR1_SH3"/>
</dbReference>
<dbReference type="InterPro" id="IPR021901">
    <property type="entry name" value="CAS_C"/>
</dbReference>
<dbReference type="InterPro" id="IPR037362">
    <property type="entry name" value="CAS_fam"/>
</dbReference>
<dbReference type="InterPro" id="IPR014928">
    <property type="entry name" value="Serine_rich_dom"/>
</dbReference>
<dbReference type="InterPro" id="IPR038319">
    <property type="entry name" value="Serine_rich_sf"/>
</dbReference>
<dbReference type="InterPro" id="IPR036028">
    <property type="entry name" value="SH3-like_dom_sf"/>
</dbReference>
<dbReference type="InterPro" id="IPR001452">
    <property type="entry name" value="SH3_domain"/>
</dbReference>
<dbReference type="PANTHER" id="PTHR10654:SF15">
    <property type="entry name" value="BREAST CANCER ANTI-ESTROGEN RESISTANCE PROTEIN 1"/>
    <property type="match status" value="1"/>
</dbReference>
<dbReference type="PANTHER" id="PTHR10654">
    <property type="entry name" value="CAS SCAFFOLDING PROTEIN"/>
    <property type="match status" value="1"/>
</dbReference>
<dbReference type="Pfam" id="PF12026">
    <property type="entry name" value="CAS_C"/>
    <property type="match status" value="1"/>
</dbReference>
<dbReference type="Pfam" id="PF08824">
    <property type="entry name" value="Serine_rich"/>
    <property type="match status" value="1"/>
</dbReference>
<dbReference type="Pfam" id="PF00018">
    <property type="entry name" value="SH3_1"/>
    <property type="match status" value="1"/>
</dbReference>
<dbReference type="PRINTS" id="PR00452">
    <property type="entry name" value="SH3DOMAIN"/>
</dbReference>
<dbReference type="PRINTS" id="PR01887">
    <property type="entry name" value="SPECTRNALPHA"/>
</dbReference>
<dbReference type="SMART" id="SM00326">
    <property type="entry name" value="SH3"/>
    <property type="match status" value="1"/>
</dbReference>
<dbReference type="SUPFAM" id="SSF50044">
    <property type="entry name" value="SH3-domain"/>
    <property type="match status" value="1"/>
</dbReference>
<dbReference type="PROSITE" id="PS50002">
    <property type="entry name" value="SH3"/>
    <property type="match status" value="1"/>
</dbReference>
<accession>P56945</accession>
<accession>B3KWD7</accession>
<accession>B4DEV4</accession>
<accession>B4DGB5</accession>
<accession>B4DIW5</accession>
<accession>B7Z7X7</accession>
<accession>E9PCL5</accession>
<accession>E9PCV2</accession>
<accession>F5GXA2</accession>
<accession>F5GXV6</accession>
<accession>F5H7Z0</accession>
<accession>F8WA69</accession>
<accession>Q6QEF7</accession>
<sequence>MNHLNVLAKALYDNVAESPDELSFRKGDIMTVLEQDTQGLDGWWLCSLHGRQGIVPGNRLKILVGMYDKKPAGPGPGPPATPAQPQPGLHAPAPPASQYTPMLPNTYQPQPDSVYLVPTPSKAQQGLYQVPGPSPQFQSPPAKQTSTFSKQTPHHPFPSPATDLYQVPPGPGGPAQDIYQVPPSAGMGHDIYQVPPSMDTRSWEGTKPPAKVVVPTRVGQGYVYEAAQPEQDEYDIPRHLLAPGPQDIYDVPPVRGLLPSQYGQEVYDTPPMAVKGPNGRDPLLEVYDVPPSVEKGLPPSNHHAVYDVPPSVSKDVPDGPLLREETYDVPPAFAKAKPFDPARTPLVLAAPPPDSPPAEDVYDVPPPAPDLYDVPPGLRRPGPGTLYDVPRERVLPPEVADGGVVDSGVYAVPPPAEREAPAEGKRLSASSTGSTRSSQSASSLEVAGPGREPLELEVAVEALARLQQGVSATVAHLLDLAGSAGATGSWRSPSEPQEPLVQDLQAAVAAVQSAVHELLEFARSAVGNAAHTSDRALHAKLSRQLQKMEDVHQTLVAHGQALDAGRGGSGATLEDLDRLVACSRAVPEDAKQLASFLHGNASLLFRRTKATAPGPEGGGTLHPNPTDKTSSIQSRPLPSPPKFTSQDSPDGQYENSEGGWMEDYDYVHLQGKEEFEKTQKELLEKGSITRQGKSQLELQQLKQFERLEQEVSRPIDHDLANWTPAQPLAPGRTGGLGPSDRQLLLFYLEQCEANLTTLTNAVDAFFTAVATNQPPKIFVAHSKFVILSAHKLVFIGDTLSRQAKAADVRSQVTHYSNLLCDLLRGIVATTKAAALQYPSPSAAQDMVERVKELGHSTQQFRRVLGQLAAA</sequence>
<gene>
    <name type="primary">BCAR1</name>
    <name type="synonym">CAS</name>
    <name type="synonym">CASS1</name>
    <name type="synonym">CRKAS</name>
</gene>
<keyword id="KW-0002">3D-structure</keyword>
<keyword id="KW-0007">Acetylation</keyword>
<keyword id="KW-0025">Alternative splicing</keyword>
<keyword id="KW-0130">Cell adhesion</keyword>
<keyword id="KW-0965">Cell junction</keyword>
<keyword id="KW-0966">Cell projection</keyword>
<keyword id="KW-0963">Cytoplasm</keyword>
<keyword id="KW-0219">Diabetes mellitus</keyword>
<keyword id="KW-0903">Direct protein sequencing</keyword>
<keyword id="KW-0597">Phosphoprotein</keyword>
<keyword id="KW-1267">Proteomics identification</keyword>
<keyword id="KW-1185">Reference proteome</keyword>
<keyword id="KW-0728">SH3 domain</keyword>
<keyword id="KW-0729">SH3-binding</keyword>
<reference key="1">
    <citation type="journal article" date="2000" name="J. Natl. Cancer Inst.">
        <title>BCAR1, a human homologue of the adapter protein p130Cas, induces anti-estrogen resistance in breast cancer cells.</title>
        <authorList>
            <person name="Brinkman A."/>
            <person name="van der Flier S."/>
            <person name="Kok E.M."/>
            <person name="Dorssers L.C.J."/>
        </authorList>
    </citation>
    <scope>NUCLEOTIDE SEQUENCE [MRNA] (ISOFORM 1)</scope>
    <scope>TISSUE SPECIFICITY</scope>
    <scope>VARIANT SER-76</scope>
    <source>
        <tissue>Mammary cancer</tissue>
    </source>
</reference>
<reference key="2">
    <citation type="submission" date="1999-12" db="EMBL/GenBank/DDBJ databases">
        <title>Interaction between human Crk-associated substrate (p130Cas) and nephrocystin.</title>
        <authorList>
            <person name="Otto E."/>
            <person name="Birnbaum S."/>
            <person name="Verbeek M."/>
            <person name="Hildebrandt F."/>
        </authorList>
    </citation>
    <scope>NUCLEOTIDE SEQUENCE [MRNA] (ISOFORM 1)</scope>
    <scope>VARIANT SER-76</scope>
    <source>
        <tissue>Testis</tissue>
    </source>
</reference>
<reference key="3">
    <citation type="submission" date="2000-03" db="EMBL/GenBank/DDBJ databases">
        <title>The effects of growth factors on tyrosine phosphorylation of p130Cas in corneal epithelial cell.</title>
        <authorList>
            <person name="Imoto Y."/>
            <person name="Ohguro N."/>
            <person name="Yoshida A."/>
            <person name="Tsujikawa M."/>
            <person name="Inoue Y."/>
            <person name="Tano Y."/>
        </authorList>
    </citation>
    <scope>NUCLEOTIDE SEQUENCE [MRNA] (ISOFORM 1)</scope>
    <scope>VARIANT SER-76</scope>
    <source>
        <tissue>Cornea</tissue>
    </source>
</reference>
<reference key="4">
    <citation type="submission" date="2004-02" db="EMBL/GenBank/DDBJ databases">
        <authorList>
            <person name="Lin L."/>
            <person name="Li H."/>
            <person name="Zhou G."/>
            <person name="Shen C."/>
            <person name="Ke R."/>
            <person name="Zhong G."/>
            <person name="Yang S."/>
        </authorList>
    </citation>
    <scope>NUCLEOTIDE SEQUENCE [MRNA] (ISOFORM 3)</scope>
</reference>
<reference key="5">
    <citation type="journal article" date="2004" name="Nat. Genet.">
        <title>Complete sequencing and characterization of 21,243 full-length human cDNAs.</title>
        <authorList>
            <person name="Ota T."/>
            <person name="Suzuki Y."/>
            <person name="Nishikawa T."/>
            <person name="Otsuki T."/>
            <person name="Sugiyama T."/>
            <person name="Irie R."/>
            <person name="Wakamatsu A."/>
            <person name="Hayashi K."/>
            <person name="Sato H."/>
            <person name="Nagai K."/>
            <person name="Kimura K."/>
            <person name="Makita H."/>
            <person name="Sekine M."/>
            <person name="Obayashi M."/>
            <person name="Nishi T."/>
            <person name="Shibahara T."/>
            <person name="Tanaka T."/>
            <person name="Ishii S."/>
            <person name="Yamamoto J."/>
            <person name="Saito K."/>
            <person name="Kawai Y."/>
            <person name="Isono Y."/>
            <person name="Nakamura Y."/>
            <person name="Nagahari K."/>
            <person name="Murakami K."/>
            <person name="Yasuda T."/>
            <person name="Iwayanagi T."/>
            <person name="Wagatsuma M."/>
            <person name="Shiratori A."/>
            <person name="Sudo H."/>
            <person name="Hosoiri T."/>
            <person name="Kaku Y."/>
            <person name="Kodaira H."/>
            <person name="Kondo H."/>
            <person name="Sugawara M."/>
            <person name="Takahashi M."/>
            <person name="Kanda K."/>
            <person name="Yokoi T."/>
            <person name="Furuya T."/>
            <person name="Kikkawa E."/>
            <person name="Omura Y."/>
            <person name="Abe K."/>
            <person name="Kamihara K."/>
            <person name="Katsuta N."/>
            <person name="Sato K."/>
            <person name="Tanikawa M."/>
            <person name="Yamazaki M."/>
            <person name="Ninomiya K."/>
            <person name="Ishibashi T."/>
            <person name="Yamashita H."/>
            <person name="Murakawa K."/>
            <person name="Fujimori K."/>
            <person name="Tanai H."/>
            <person name="Kimata M."/>
            <person name="Watanabe M."/>
            <person name="Hiraoka S."/>
            <person name="Chiba Y."/>
            <person name="Ishida S."/>
            <person name="Ono Y."/>
            <person name="Takiguchi S."/>
            <person name="Watanabe S."/>
            <person name="Yosida M."/>
            <person name="Hotuta T."/>
            <person name="Kusano J."/>
            <person name="Kanehori K."/>
            <person name="Takahashi-Fujii A."/>
            <person name="Hara H."/>
            <person name="Tanase T.-O."/>
            <person name="Nomura Y."/>
            <person name="Togiya S."/>
            <person name="Komai F."/>
            <person name="Hara R."/>
            <person name="Takeuchi K."/>
            <person name="Arita M."/>
            <person name="Imose N."/>
            <person name="Musashino K."/>
            <person name="Yuuki H."/>
            <person name="Oshima A."/>
            <person name="Sasaki N."/>
            <person name="Aotsuka S."/>
            <person name="Yoshikawa Y."/>
            <person name="Matsunawa H."/>
            <person name="Ichihara T."/>
            <person name="Shiohata N."/>
            <person name="Sano S."/>
            <person name="Moriya S."/>
            <person name="Momiyama H."/>
            <person name="Satoh N."/>
            <person name="Takami S."/>
            <person name="Terashima Y."/>
            <person name="Suzuki O."/>
            <person name="Nakagawa S."/>
            <person name="Senoh A."/>
            <person name="Mizoguchi H."/>
            <person name="Goto Y."/>
            <person name="Shimizu F."/>
            <person name="Wakebe H."/>
            <person name="Hishigaki H."/>
            <person name="Watanabe T."/>
            <person name="Sugiyama A."/>
            <person name="Takemoto M."/>
            <person name="Kawakami B."/>
            <person name="Yamazaki M."/>
            <person name="Watanabe K."/>
            <person name="Kumagai A."/>
            <person name="Itakura S."/>
            <person name="Fukuzumi Y."/>
            <person name="Fujimori Y."/>
            <person name="Komiyama M."/>
            <person name="Tashiro H."/>
            <person name="Tanigami A."/>
            <person name="Fujiwara T."/>
            <person name="Ono T."/>
            <person name="Yamada K."/>
            <person name="Fujii Y."/>
            <person name="Ozaki K."/>
            <person name="Hirao M."/>
            <person name="Ohmori Y."/>
            <person name="Kawabata A."/>
            <person name="Hikiji T."/>
            <person name="Kobatake N."/>
            <person name="Inagaki H."/>
            <person name="Ikema Y."/>
            <person name="Okamoto S."/>
            <person name="Okitani R."/>
            <person name="Kawakami T."/>
            <person name="Noguchi S."/>
            <person name="Itoh T."/>
            <person name="Shigeta K."/>
            <person name="Senba T."/>
            <person name="Matsumura K."/>
            <person name="Nakajima Y."/>
            <person name="Mizuno T."/>
            <person name="Morinaga M."/>
            <person name="Sasaki M."/>
            <person name="Togashi T."/>
            <person name="Oyama M."/>
            <person name="Hata H."/>
            <person name="Watanabe M."/>
            <person name="Komatsu T."/>
            <person name="Mizushima-Sugano J."/>
            <person name="Satoh T."/>
            <person name="Shirai Y."/>
            <person name="Takahashi Y."/>
            <person name="Nakagawa K."/>
            <person name="Okumura K."/>
            <person name="Nagase T."/>
            <person name="Nomura N."/>
            <person name="Kikuchi H."/>
            <person name="Masuho Y."/>
            <person name="Yamashita R."/>
            <person name="Nakai K."/>
            <person name="Yada T."/>
            <person name="Nakamura Y."/>
            <person name="Ohara O."/>
            <person name="Isogai T."/>
            <person name="Sugano S."/>
        </authorList>
    </citation>
    <scope>NUCLEOTIDE SEQUENCE [LARGE SCALE MRNA] (ISOFORMS 1; 2; 4; 5; 6; 7 AND 8)</scope>
    <scope>VARIANT SER-76</scope>
    <source>
        <tissue>Amygdala</tissue>
        <tissue>Caudate nucleus</tissue>
        <tissue>Cerebellum</tissue>
        <tissue>Hippocampus</tissue>
        <tissue>Teratocarcinoma</tissue>
        <tissue>Testis</tissue>
    </source>
</reference>
<reference key="6">
    <citation type="journal article" date="2004" name="Nature">
        <title>The sequence and analysis of duplication-rich human chromosome 16.</title>
        <authorList>
            <person name="Martin J."/>
            <person name="Han C."/>
            <person name="Gordon L.A."/>
            <person name="Terry A."/>
            <person name="Prabhakar S."/>
            <person name="She X."/>
            <person name="Xie G."/>
            <person name="Hellsten U."/>
            <person name="Chan Y.M."/>
            <person name="Altherr M."/>
            <person name="Couronne O."/>
            <person name="Aerts A."/>
            <person name="Bajorek E."/>
            <person name="Black S."/>
            <person name="Blumer H."/>
            <person name="Branscomb E."/>
            <person name="Brown N.C."/>
            <person name="Bruno W.J."/>
            <person name="Buckingham J.M."/>
            <person name="Callen D.F."/>
            <person name="Campbell C.S."/>
            <person name="Campbell M.L."/>
            <person name="Campbell E.W."/>
            <person name="Caoile C."/>
            <person name="Challacombe J.F."/>
            <person name="Chasteen L.A."/>
            <person name="Chertkov O."/>
            <person name="Chi H.C."/>
            <person name="Christensen M."/>
            <person name="Clark L.M."/>
            <person name="Cohn J.D."/>
            <person name="Denys M."/>
            <person name="Detter J.C."/>
            <person name="Dickson M."/>
            <person name="Dimitrijevic-Bussod M."/>
            <person name="Escobar J."/>
            <person name="Fawcett J.J."/>
            <person name="Flowers D."/>
            <person name="Fotopulos D."/>
            <person name="Glavina T."/>
            <person name="Gomez M."/>
            <person name="Gonzales E."/>
            <person name="Goodstein D."/>
            <person name="Goodwin L.A."/>
            <person name="Grady D.L."/>
            <person name="Grigoriev I."/>
            <person name="Groza M."/>
            <person name="Hammon N."/>
            <person name="Hawkins T."/>
            <person name="Haydu L."/>
            <person name="Hildebrand C.E."/>
            <person name="Huang W."/>
            <person name="Israni S."/>
            <person name="Jett J."/>
            <person name="Jewett P.B."/>
            <person name="Kadner K."/>
            <person name="Kimball H."/>
            <person name="Kobayashi A."/>
            <person name="Krawczyk M.-C."/>
            <person name="Leyba T."/>
            <person name="Longmire J.L."/>
            <person name="Lopez F."/>
            <person name="Lou Y."/>
            <person name="Lowry S."/>
            <person name="Ludeman T."/>
            <person name="Manohar C.F."/>
            <person name="Mark G.A."/>
            <person name="McMurray K.L."/>
            <person name="Meincke L.J."/>
            <person name="Morgan J."/>
            <person name="Moyzis R.K."/>
            <person name="Mundt M.O."/>
            <person name="Munk A.C."/>
            <person name="Nandkeshwar R.D."/>
            <person name="Pitluck S."/>
            <person name="Pollard M."/>
            <person name="Predki P."/>
            <person name="Parson-Quintana B."/>
            <person name="Ramirez L."/>
            <person name="Rash S."/>
            <person name="Retterer J."/>
            <person name="Ricke D.O."/>
            <person name="Robinson D.L."/>
            <person name="Rodriguez A."/>
            <person name="Salamov A."/>
            <person name="Saunders E.H."/>
            <person name="Scott D."/>
            <person name="Shough T."/>
            <person name="Stallings R.L."/>
            <person name="Stalvey M."/>
            <person name="Sutherland R.D."/>
            <person name="Tapia R."/>
            <person name="Tesmer J.G."/>
            <person name="Thayer N."/>
            <person name="Thompson L.S."/>
            <person name="Tice H."/>
            <person name="Torney D.C."/>
            <person name="Tran-Gyamfi M."/>
            <person name="Tsai M."/>
            <person name="Ulanovsky L.E."/>
            <person name="Ustaszewska A."/>
            <person name="Vo N."/>
            <person name="White P.S."/>
            <person name="Williams A.L."/>
            <person name="Wills P.L."/>
            <person name="Wu J.-R."/>
            <person name="Wu K."/>
            <person name="Yang J."/>
            <person name="DeJong P."/>
            <person name="Bruce D."/>
            <person name="Doggett N.A."/>
            <person name="Deaven L."/>
            <person name="Schmutz J."/>
            <person name="Grimwood J."/>
            <person name="Richardson P."/>
            <person name="Rokhsar D.S."/>
            <person name="Eichler E.E."/>
            <person name="Gilna P."/>
            <person name="Lucas S.M."/>
            <person name="Myers R.M."/>
            <person name="Rubin E.M."/>
            <person name="Pennacchio L.A."/>
        </authorList>
    </citation>
    <scope>NUCLEOTIDE SEQUENCE [LARGE SCALE GENOMIC DNA]</scope>
</reference>
<reference key="7">
    <citation type="submission" date="2009-10" db="UniProtKB">
        <authorList>
            <person name="Bienvenut W.V."/>
            <person name="Lempens A."/>
            <person name="Norman J.C."/>
        </authorList>
    </citation>
    <scope>PROTEIN SEQUENCE OF 1-9; 380-391 AND 792-801</scope>
    <scope>ACETYLATION AT MET-1</scope>
    <scope>IDENTIFICATION BY MASS SPECTROMETRY</scope>
    <source>
        <tissue>Ovarian carcinoma</tissue>
    </source>
</reference>
<reference key="8">
    <citation type="journal article" date="1997" name="J. Biol. Chem.">
        <title>Involvement of p130(Cas) and p105(HEF1), a novel Cas-like docking protein, in a cytoskeleton-dependent signaling pathway initiated by ligation of integrin or antigen receptor on human B cells.</title>
        <authorList>
            <person name="Manie S.N."/>
            <person name="Beck A.R.P."/>
            <person name="Astier A."/>
            <person name="Law S.F."/>
            <person name="Canty T."/>
            <person name="Hirai H."/>
            <person name="Druker B.J."/>
            <person name="Avraham H."/>
            <person name="Haghayeghi N."/>
            <person name="Sattler M."/>
            <person name="Salgia R."/>
            <person name="Griffin J.D."/>
            <person name="Golemis E.A."/>
            <person name="Freedman A.S."/>
        </authorList>
    </citation>
    <scope>INTERACTION WITH CRKL; LYN AND PTK2B</scope>
    <scope>TISSUE SPECIFICITY</scope>
</reference>
<reference key="9">
    <citation type="journal article" date="1999" name="Exp. Cell Res.">
        <title>Dimerization of the docking/adaptor protein HEF1 via a carboxy-terminal helix-loop-helix domain.</title>
        <authorList>
            <person name="Law S.F."/>
            <person name="Zhang Y.-Z."/>
            <person name="Fashena S.J."/>
            <person name="Toby G."/>
            <person name="Estojak J."/>
            <person name="Golemis E.A."/>
        </authorList>
    </citation>
    <scope>INTERACTION WITH NEDD9</scope>
</reference>
<reference key="10">
    <citation type="journal article" date="1999" name="Nat. Cell Biol.">
        <title>Melanoma chondroitin sulphate proteoglycan regulates cell spreading through Cdc42, Ack-1 and p130cas.</title>
        <authorList>
            <person name="Eisenmann K.M."/>
            <person name="McCarthy J.B."/>
            <person name="Simpson M.A."/>
            <person name="Keely P.J."/>
            <person name="Guan J.-L."/>
            <person name="Tachibana K."/>
            <person name="Lim L."/>
            <person name="Manser E."/>
            <person name="Furcht L.T."/>
            <person name="Iida J."/>
        </authorList>
    </citation>
    <scope>INTERACTION WITH CSPG4</scope>
</reference>
<reference key="11">
    <citation type="journal article" date="2001" name="Mol. Cell. Biol.">
        <title>SH2-containing inositol 5'-phosphatase SHIP2 associates with the p130(Cas) adapter protein and regulates cellular adhesion and spreading.</title>
        <authorList>
            <person name="Prasad N."/>
            <person name="Topping R.S."/>
            <person name="Decker S.J."/>
        </authorList>
    </citation>
    <scope>INTERACTION WITH INPPL1</scope>
</reference>
<reference key="12">
    <citation type="journal article" date="2002" name="J. Cell Sci.">
        <title>Novel function of Chat in controlling cell adhesion via Cas-Crk-C3G-pathway-mediated Rap1 activation.</title>
        <authorList>
            <person name="Sakakibara A."/>
            <person name="Ohba Y."/>
            <person name="Kurokawa K."/>
            <person name="Matsuda M."/>
            <person name="Hattori S."/>
        </authorList>
    </citation>
    <scope>FUNCTION</scope>
    <scope>IDENTIFICATION IN A COMPLEX WITH SH2D3C AND CRK</scope>
</reference>
<reference key="13">
    <citation type="journal article" date="2003" name="J. Biol. Chem.">
        <title>p130Cas Couples the tyrosine kinase Bmx/Etk with regulation of the actin cytoskeleton and cell migration.</title>
        <authorList>
            <person name="Abassi Y.A."/>
            <person name="Rehn M."/>
            <person name="Ekman N."/>
            <person name="Alitalo K."/>
            <person name="Vuori K."/>
        </authorList>
    </citation>
    <scope>FUNCTION</scope>
    <scope>SUBCELLULAR LOCATION</scope>
    <scope>PHOSPHORYLATION</scope>
    <scope>INTERACTION WITH BMX</scope>
</reference>
<reference key="14">
    <citation type="journal article" date="2006" name="Immunity">
        <title>The hematopoietic isoform of Cas-Hef1-associated signal transducer regulates chemokine-induced inside-out signaling and T cell trafficking.</title>
        <authorList>
            <person name="Regelmann A.G."/>
            <person name="Danzl N.M."/>
            <person name="Wanjalla C."/>
            <person name="Alexandropoulos K."/>
        </authorList>
    </citation>
    <scope>INTERACTION WITH SH2D3C</scope>
</reference>
<reference key="15">
    <citation type="journal article" date="2006" name="J. Biol. Chem.">
        <title>Ack1 mediates Cdc42-dependent cell migration and signaling to p130Cas.</title>
        <authorList>
            <person name="Modzelewska K."/>
            <person name="Newman L.P."/>
            <person name="Desai R."/>
            <person name="Keely P.J."/>
        </authorList>
    </citation>
    <scope>FUNCTION IN CELL MIGRATION</scope>
    <scope>INTERACTION WITH BCAR1; CDC42 AND CRK</scope>
</reference>
<reference key="16">
    <citation type="journal article" date="2008" name="Proc. Natl. Acad. Sci. U.S.A.">
        <title>A quantitative atlas of mitotic phosphorylation.</title>
        <authorList>
            <person name="Dephoure N."/>
            <person name="Zhou C."/>
            <person name="Villen J."/>
            <person name="Beausoleil S.A."/>
            <person name="Bakalarski C.E."/>
            <person name="Elledge S.J."/>
            <person name="Gygi S.P."/>
        </authorList>
    </citation>
    <scope>PHOSPHORYLATION [LARGE SCALE ANALYSIS] AT SER-134; SER-139; THR-269 AND SER-292</scope>
    <scope>IDENTIFICATION BY MASS SPECTROMETRY [LARGE SCALE ANALYSIS]</scope>
    <source>
        <tissue>Cervix carcinoma</tissue>
    </source>
</reference>
<reference key="17">
    <citation type="journal article" date="2009" name="Cell. Signal.">
        <title>AND-34/BCAR3 regulates adhesion-dependent p130Cas serine phosphorylation and breast cancer cell growth pattern.</title>
        <authorList>
            <person name="Makkinje A."/>
            <person name="Near R.I."/>
            <person name="Infusini G."/>
            <person name="Vanden Borre P."/>
            <person name="Bloom A."/>
            <person name="Cai D."/>
            <person name="Costello C.E."/>
            <person name="Lerner A."/>
        </authorList>
    </citation>
    <scope>PHOSPHORYLATION AT SER-139; SER-437 AND SER-639</scope>
    <scope>INTERACTION WITH BCAR3</scope>
</reference>
<reference key="18">
    <citation type="journal article" date="2009" name="J. Cell. Physiol.">
        <title>Pyk2 mediates endothelin-1 signaling via p130Cas/BCAR3 cascade and regulates human glomerular mesangial cell adhesion and spreading.</title>
        <authorList>
            <person name="Rufanova V.A."/>
            <person name="Alexanian A."/>
            <person name="Wakatsuki T."/>
            <person name="Lerner A."/>
            <person name="Sorokin A."/>
        </authorList>
    </citation>
    <scope>INTERACTION WITH PTK2B/PYK2</scope>
    <scope>PHOSPHORYLATION</scope>
</reference>
<reference key="19">
    <citation type="journal article" date="2009" name="J. Clin. Invest.">
        <title>Ras- and PI3K-dependent breast tumorigenesis in mice and humans requires focal adhesion kinase signaling.</title>
        <authorList>
            <person name="Pylayeva Y."/>
            <person name="Gillen K.M."/>
            <person name="Gerald W."/>
            <person name="Beggs H.E."/>
            <person name="Reichardt L.F."/>
            <person name="Giancotti F.G."/>
        </authorList>
    </citation>
    <scope>PHOSPHORYLATION BY SRC UPON ACTIVATION OF PTK2/FAK1</scope>
</reference>
<reference key="20">
    <citation type="journal article" date="2010" name="Mol. Cell. Proteomics">
        <title>Comprehensive analysis of phosphorylation sites in Tensin1 reveals regulation by p38MAPK.</title>
        <authorList>
            <person name="Hall E.H."/>
            <person name="Balsbaugh J.L."/>
            <person name="Rose K.L."/>
            <person name="Shabanowitz J."/>
            <person name="Hunt D.F."/>
            <person name="Brautigan D.L."/>
        </authorList>
    </citation>
    <scope>INTERACTION WITH TNS1</scope>
</reference>
<reference key="21">
    <citation type="journal article" date="2010" name="Proc. Natl. Acad. Sci. U.S.A.">
        <title>Pseudopodium-enriched atypical kinase 1 regulates the cytoskeleton and cancer progression.</title>
        <authorList>
            <person name="Wang Y."/>
            <person name="Kelber J.A."/>
            <person name="Tran Cao H.S."/>
            <person name="Cantin G.T."/>
            <person name="Lin R."/>
            <person name="Wang W."/>
            <person name="Kaushal S."/>
            <person name="Bristow J.M."/>
            <person name="Edgington T.S."/>
            <person name="Hoffman R.M."/>
            <person name="Bouvet M."/>
            <person name="Yates J.R. III"/>
            <person name="Klemke R.L."/>
        </authorList>
    </citation>
    <scope>INTERACTION WITH PEAK1</scope>
</reference>
<reference key="22">
    <citation type="journal article" date="2010" name="Proc. Natl. Acad. Sci. U.S.A.">
        <authorList>
            <person name="Wang Y."/>
            <person name="Kelber J.A."/>
            <person name="Tran Cao H.S."/>
            <person name="Cantin G.T."/>
            <person name="Lin R."/>
            <person name="Wang W."/>
            <person name="Kaushal S."/>
            <person name="Bristow J.M."/>
            <person name="Edgington T.S."/>
            <person name="Hoffman R.M."/>
            <person name="Bouvet M."/>
            <person name="Yates J.R. III"/>
            <person name="Klemke R.L."/>
        </authorList>
    </citation>
    <scope>ERRATUM OF PUBMED:20534451</scope>
</reference>
<reference key="23">
    <citation type="journal article" date="2010" name="Sci. Signal.">
        <title>Quantitative phosphoproteomics reveals widespread full phosphorylation site occupancy during mitosis.</title>
        <authorList>
            <person name="Olsen J.V."/>
            <person name="Vermeulen M."/>
            <person name="Santamaria A."/>
            <person name="Kumar C."/>
            <person name="Miller M.L."/>
            <person name="Jensen L.J."/>
            <person name="Gnad F."/>
            <person name="Cox J."/>
            <person name="Jensen T.S."/>
            <person name="Nigg E.A."/>
            <person name="Brunak S."/>
            <person name="Mann M."/>
        </authorList>
    </citation>
    <scope>PHOSPHORYLATION [LARGE SCALE ANALYSIS] AT SER-134 AND SER-139</scope>
    <scope>IDENTIFICATION BY MASS SPECTROMETRY [LARGE SCALE ANALYSIS]</scope>
    <source>
        <tissue>Cervix carcinoma</tissue>
    </source>
</reference>
<reference key="24">
    <citation type="journal article" date="2011" name="Sci. Signal.">
        <title>System-wide temporal characterization of the proteome and phosphoproteome of human embryonic stem cell differentiation.</title>
        <authorList>
            <person name="Rigbolt K.T."/>
            <person name="Prokhorova T.A."/>
            <person name="Akimov V."/>
            <person name="Henningsen J."/>
            <person name="Johansen P.T."/>
            <person name="Kratchmarova I."/>
            <person name="Kassem M."/>
            <person name="Mann M."/>
            <person name="Olsen J.V."/>
            <person name="Blagoev B."/>
        </authorList>
    </citation>
    <scope>PHOSPHORYLATION [LARGE SCALE ANALYSIS] AT SER-428</scope>
    <scope>IDENTIFICATION BY MASS SPECTROMETRY [LARGE SCALE ANALYSIS]</scope>
</reference>
<reference key="25">
    <citation type="journal article" date="2012" name="Mol. Cell. Biol.">
        <title>Protein tyrosine phosphatase alpha phosphotyrosyl-789 binds BCAR3 to position Cas for activation at integrin-mediated focal adhesions.</title>
        <authorList>
            <person name="Sun G."/>
            <person name="Cheng S.Y."/>
            <person name="Chen M."/>
            <person name="Lim C.J."/>
            <person name="Pallen C.J."/>
        </authorList>
    </citation>
    <scope>IDENTIFICATION IN A COMPLEX WITH PTPRA; BCAR3 AND SRC</scope>
</reference>
<reference key="26">
    <citation type="journal article" date="2013" name="J. Proteome Res.">
        <title>Toward a comprehensive characterization of a human cancer cell phosphoproteome.</title>
        <authorList>
            <person name="Zhou H."/>
            <person name="Di Palma S."/>
            <person name="Preisinger C."/>
            <person name="Peng M."/>
            <person name="Polat A.N."/>
            <person name="Heck A.J."/>
            <person name="Mohammed S."/>
        </authorList>
    </citation>
    <scope>PHOSPHORYLATION [LARGE SCALE ANALYSIS] AT SER-139 AND SER-639</scope>
    <scope>IDENTIFICATION BY MASS SPECTROMETRY [LARGE SCALE ANALYSIS]</scope>
    <source>
        <tissue>Cervix carcinoma</tissue>
        <tissue>Erythroleukemia</tissue>
    </source>
</reference>
<reference key="27">
    <citation type="journal article" date="2013" name="Oncogene">
        <title>Identification and functional characterization of p130Cas as a substrate of protein tyrosine phosphatase nonreceptor 14.</title>
        <authorList>
            <person name="Zhang P."/>
            <person name="Guo A."/>
            <person name="Possemato A."/>
            <person name="Wang C."/>
            <person name="Beard L."/>
            <person name="Carlin C."/>
            <person name="Markowitz S.D."/>
            <person name="Polakiewicz R.D."/>
            <person name="Wang Z."/>
        </authorList>
    </citation>
    <scope>DEPHOSPHORYLATION AT TYR-128 BY PTPN14</scope>
    <scope>PHOSPHORYLATION AT TYR-128 BY SRC</scope>
</reference>
<reference key="28">
    <citation type="journal article" date="2005" name="J. Mol. Biol.">
        <title>The 1.1 A resolution crystal structure of the p130cas SH3 domain and ramifications for ligand selectivity.</title>
        <authorList>
            <person name="Wisniewska M."/>
            <person name="Bossenmaier B."/>
            <person name="Georges G."/>
            <person name="Hesse F."/>
            <person name="Dangl M."/>
            <person name="Kunkele K.P."/>
            <person name="Ioannidis I."/>
            <person name="Huber R."/>
            <person name="Engh R.A."/>
        </authorList>
    </citation>
    <scope>X-RAY CRYSTALLOGRAPHY (1.14 ANGSTROMS) OF 3-71</scope>
</reference>
<reference key="29">
    <citation type="journal article" date="2011" name="Nat. Struct. Mol. Biol.">
        <title>NSP-Cas protein structures reveal a promiscuous interaction module in cell signaling.</title>
        <authorList>
            <person name="Mace P.D."/>
            <person name="Wallez Y."/>
            <person name="Dobaczewska M.K."/>
            <person name="Lee J.J."/>
            <person name="Robinson H."/>
            <person name="Pasquale E.B."/>
            <person name="Riedl S.J."/>
        </authorList>
    </citation>
    <scope>X-RAY CRYSTALLOGRAPHY (2.5 ANGSTROMS) OF 645-870 IN COMPLEX WITH SH2D3C AND BCAR3</scope>
    <scope>MUTAGENESIS OF LEU-787; PHE-794 AND ASP-797</scope>
</reference>
<reference key="30">
    <citation type="journal article" date="2006" name="Science">
        <title>The consensus coding sequences of human breast and colorectal cancers.</title>
        <authorList>
            <person name="Sjoeblom T."/>
            <person name="Jones S."/>
            <person name="Wood L.D."/>
            <person name="Parsons D.W."/>
            <person name="Lin J."/>
            <person name="Barber T.D."/>
            <person name="Mandelker D."/>
            <person name="Leary R.J."/>
            <person name="Ptak J."/>
            <person name="Silliman N."/>
            <person name="Szabo S."/>
            <person name="Buckhaults P."/>
            <person name="Farrell C."/>
            <person name="Meeh P."/>
            <person name="Markowitz S.D."/>
            <person name="Willis J."/>
            <person name="Dawson D."/>
            <person name="Willson J.K.V."/>
            <person name="Gazdar A.F."/>
            <person name="Hartigan J."/>
            <person name="Wu L."/>
            <person name="Liu C."/>
            <person name="Parmigiani G."/>
            <person name="Park B.H."/>
            <person name="Bachman K.E."/>
            <person name="Papadopoulos N."/>
            <person name="Vogelstein B."/>
            <person name="Kinzler K.W."/>
            <person name="Velculescu V.E."/>
        </authorList>
    </citation>
    <scope>VARIANT [LARGE SCALE ANALYSIS] THR-407</scope>
</reference>
<organism>
    <name type="scientific">Homo sapiens</name>
    <name type="common">Human</name>
    <dbReference type="NCBI Taxonomy" id="9606"/>
    <lineage>
        <taxon>Eukaryota</taxon>
        <taxon>Metazoa</taxon>
        <taxon>Chordata</taxon>
        <taxon>Craniata</taxon>
        <taxon>Vertebrata</taxon>
        <taxon>Euteleostomi</taxon>
        <taxon>Mammalia</taxon>
        <taxon>Eutheria</taxon>
        <taxon>Euarchontoglires</taxon>
        <taxon>Primates</taxon>
        <taxon>Haplorrhini</taxon>
        <taxon>Catarrhini</taxon>
        <taxon>Hominidae</taxon>
        <taxon>Homo</taxon>
    </lineage>
</organism>